<protein>
    <recommendedName>
        <fullName evidence="1">Guanylate kinase</fullName>
        <ecNumber evidence="1">2.7.4.8</ecNumber>
    </recommendedName>
    <alternativeName>
        <fullName evidence="1">GMP kinase</fullName>
    </alternativeName>
</protein>
<name>KGUA_ECO57</name>
<proteinExistence type="inferred from homology"/>
<dbReference type="EC" id="2.7.4.8" evidence="1"/>
<dbReference type="EMBL" id="AE005174">
    <property type="protein sequence ID" value="AAG58792.1"/>
    <property type="molecule type" value="Genomic_DNA"/>
</dbReference>
<dbReference type="EMBL" id="BA000007">
    <property type="protein sequence ID" value="BAB37946.1"/>
    <property type="molecule type" value="Genomic_DNA"/>
</dbReference>
<dbReference type="PIR" id="C91194">
    <property type="entry name" value="C91194"/>
</dbReference>
<dbReference type="PIR" id="D86041">
    <property type="entry name" value="D86041"/>
</dbReference>
<dbReference type="RefSeq" id="NP_312550.1">
    <property type="nucleotide sequence ID" value="NC_002695.1"/>
</dbReference>
<dbReference type="RefSeq" id="WP_001301691.1">
    <property type="nucleotide sequence ID" value="NZ_VOAI01000021.1"/>
</dbReference>
<dbReference type="SMR" id="Q8XD88"/>
<dbReference type="STRING" id="155864.Z5074"/>
<dbReference type="GeneID" id="915521"/>
<dbReference type="KEGG" id="ece:Z5074"/>
<dbReference type="KEGG" id="ecs:ECs_4523"/>
<dbReference type="PATRIC" id="fig|386585.9.peg.4741"/>
<dbReference type="eggNOG" id="COG0194">
    <property type="taxonomic scope" value="Bacteria"/>
</dbReference>
<dbReference type="HOGENOM" id="CLU_001715_1_0_6"/>
<dbReference type="OMA" id="EWAVVHG"/>
<dbReference type="Proteomes" id="UP000000558">
    <property type="component" value="Chromosome"/>
</dbReference>
<dbReference type="Proteomes" id="UP000002519">
    <property type="component" value="Chromosome"/>
</dbReference>
<dbReference type="GO" id="GO:0005829">
    <property type="term" value="C:cytosol"/>
    <property type="evidence" value="ECO:0007669"/>
    <property type="project" value="TreeGrafter"/>
</dbReference>
<dbReference type="GO" id="GO:0005524">
    <property type="term" value="F:ATP binding"/>
    <property type="evidence" value="ECO:0007669"/>
    <property type="project" value="UniProtKB-UniRule"/>
</dbReference>
<dbReference type="GO" id="GO:0004385">
    <property type="term" value="F:guanylate kinase activity"/>
    <property type="evidence" value="ECO:0007669"/>
    <property type="project" value="UniProtKB-UniRule"/>
</dbReference>
<dbReference type="CDD" id="cd00071">
    <property type="entry name" value="GMPK"/>
    <property type="match status" value="1"/>
</dbReference>
<dbReference type="FunFam" id="3.40.50.300:FF:000084">
    <property type="entry name" value="Guanylate kinase"/>
    <property type="match status" value="1"/>
</dbReference>
<dbReference type="FunFam" id="3.30.63.10:FF:000002">
    <property type="entry name" value="Guanylate kinase 1"/>
    <property type="match status" value="1"/>
</dbReference>
<dbReference type="Gene3D" id="3.30.63.10">
    <property type="entry name" value="Guanylate Kinase phosphate binding domain"/>
    <property type="match status" value="1"/>
</dbReference>
<dbReference type="Gene3D" id="3.40.50.300">
    <property type="entry name" value="P-loop containing nucleotide triphosphate hydrolases"/>
    <property type="match status" value="1"/>
</dbReference>
<dbReference type="HAMAP" id="MF_00328">
    <property type="entry name" value="Guanylate_kinase"/>
    <property type="match status" value="1"/>
</dbReference>
<dbReference type="InterPro" id="IPR008145">
    <property type="entry name" value="GK/Ca_channel_bsu"/>
</dbReference>
<dbReference type="InterPro" id="IPR008144">
    <property type="entry name" value="Guanylate_kin-like_dom"/>
</dbReference>
<dbReference type="InterPro" id="IPR017665">
    <property type="entry name" value="Guanylate_kinase"/>
</dbReference>
<dbReference type="InterPro" id="IPR020590">
    <property type="entry name" value="Guanylate_kinase_CS"/>
</dbReference>
<dbReference type="InterPro" id="IPR027417">
    <property type="entry name" value="P-loop_NTPase"/>
</dbReference>
<dbReference type="NCBIfam" id="TIGR03263">
    <property type="entry name" value="guanyl_kin"/>
    <property type="match status" value="1"/>
</dbReference>
<dbReference type="PANTHER" id="PTHR23117:SF13">
    <property type="entry name" value="GUANYLATE KINASE"/>
    <property type="match status" value="1"/>
</dbReference>
<dbReference type="PANTHER" id="PTHR23117">
    <property type="entry name" value="GUANYLATE KINASE-RELATED"/>
    <property type="match status" value="1"/>
</dbReference>
<dbReference type="Pfam" id="PF00625">
    <property type="entry name" value="Guanylate_kin"/>
    <property type="match status" value="1"/>
</dbReference>
<dbReference type="SMART" id="SM00072">
    <property type="entry name" value="GuKc"/>
    <property type="match status" value="1"/>
</dbReference>
<dbReference type="SUPFAM" id="SSF52540">
    <property type="entry name" value="P-loop containing nucleoside triphosphate hydrolases"/>
    <property type="match status" value="1"/>
</dbReference>
<dbReference type="PROSITE" id="PS00856">
    <property type="entry name" value="GUANYLATE_KINASE_1"/>
    <property type="match status" value="1"/>
</dbReference>
<dbReference type="PROSITE" id="PS50052">
    <property type="entry name" value="GUANYLATE_KINASE_2"/>
    <property type="match status" value="1"/>
</dbReference>
<comment type="function">
    <text evidence="1">Essential for recycling GMP and indirectly, cGMP.</text>
</comment>
<comment type="catalytic activity">
    <reaction evidence="1">
        <text>GMP + ATP = GDP + ADP</text>
        <dbReference type="Rhea" id="RHEA:20780"/>
        <dbReference type="ChEBI" id="CHEBI:30616"/>
        <dbReference type="ChEBI" id="CHEBI:58115"/>
        <dbReference type="ChEBI" id="CHEBI:58189"/>
        <dbReference type="ChEBI" id="CHEBI:456216"/>
        <dbReference type="EC" id="2.7.4.8"/>
    </reaction>
</comment>
<comment type="subcellular location">
    <subcellularLocation>
        <location evidence="1">Cytoplasm</location>
    </subcellularLocation>
</comment>
<comment type="similarity">
    <text evidence="1">Belongs to the guanylate kinase family.</text>
</comment>
<accession>Q8XD88</accession>
<evidence type="ECO:0000255" key="1">
    <source>
        <dbReference type="HAMAP-Rule" id="MF_00328"/>
    </source>
</evidence>
<reference key="1">
    <citation type="journal article" date="2001" name="Nature">
        <title>Genome sequence of enterohaemorrhagic Escherichia coli O157:H7.</title>
        <authorList>
            <person name="Perna N.T."/>
            <person name="Plunkett G. III"/>
            <person name="Burland V."/>
            <person name="Mau B."/>
            <person name="Glasner J.D."/>
            <person name="Rose D.J."/>
            <person name="Mayhew G.F."/>
            <person name="Evans P.S."/>
            <person name="Gregor J."/>
            <person name="Kirkpatrick H.A."/>
            <person name="Posfai G."/>
            <person name="Hackett J."/>
            <person name="Klink S."/>
            <person name="Boutin A."/>
            <person name="Shao Y."/>
            <person name="Miller L."/>
            <person name="Grotbeck E.J."/>
            <person name="Davis N.W."/>
            <person name="Lim A."/>
            <person name="Dimalanta E.T."/>
            <person name="Potamousis K."/>
            <person name="Apodaca J."/>
            <person name="Anantharaman T.S."/>
            <person name="Lin J."/>
            <person name="Yen G."/>
            <person name="Schwartz D.C."/>
            <person name="Welch R.A."/>
            <person name="Blattner F.R."/>
        </authorList>
    </citation>
    <scope>NUCLEOTIDE SEQUENCE [LARGE SCALE GENOMIC DNA]</scope>
    <source>
        <strain>O157:H7 / EDL933 / ATCC 700927 / EHEC</strain>
    </source>
</reference>
<reference key="2">
    <citation type="journal article" date="2001" name="DNA Res.">
        <title>Complete genome sequence of enterohemorrhagic Escherichia coli O157:H7 and genomic comparison with a laboratory strain K-12.</title>
        <authorList>
            <person name="Hayashi T."/>
            <person name="Makino K."/>
            <person name="Ohnishi M."/>
            <person name="Kurokawa K."/>
            <person name="Ishii K."/>
            <person name="Yokoyama K."/>
            <person name="Han C.-G."/>
            <person name="Ohtsubo E."/>
            <person name="Nakayama K."/>
            <person name="Murata T."/>
            <person name="Tanaka M."/>
            <person name="Tobe T."/>
            <person name="Iida T."/>
            <person name="Takami H."/>
            <person name="Honda T."/>
            <person name="Sasakawa C."/>
            <person name="Ogasawara N."/>
            <person name="Yasunaga T."/>
            <person name="Kuhara S."/>
            <person name="Shiba T."/>
            <person name="Hattori M."/>
            <person name="Shinagawa H."/>
        </authorList>
    </citation>
    <scope>NUCLEOTIDE SEQUENCE [LARGE SCALE GENOMIC DNA]</scope>
    <source>
        <strain>O157:H7 / Sakai / RIMD 0509952 / EHEC</strain>
    </source>
</reference>
<gene>
    <name evidence="1" type="primary">gmk</name>
    <name type="ordered locus">Z5074</name>
    <name type="ordered locus">ECs4523</name>
</gene>
<feature type="chain" id="PRO_0000170536" description="Guanylate kinase">
    <location>
        <begin position="1"/>
        <end position="207"/>
    </location>
</feature>
<feature type="domain" description="Guanylate kinase-like" evidence="1">
    <location>
        <begin position="4"/>
        <end position="184"/>
    </location>
</feature>
<feature type="binding site" evidence="1">
    <location>
        <begin position="11"/>
        <end position="18"/>
    </location>
    <ligand>
        <name>ATP</name>
        <dbReference type="ChEBI" id="CHEBI:30616"/>
    </ligand>
</feature>
<sequence length="207" mass="23651">MAQGTLYIVSAPSGAGKSSLIQALLKTQPLYDTQVSVSHTTRQPRPGEVHGEHYFFVNHDEFKEMISRDAFLEHAEVFGNYYGTSREAIEQVLATGVDVFLDIDWQGAQQIRQKMPHARSIFILPPSKIELDRRLRGRDQDSEEVIAKRMAQAVAEMSHYAEYDYLIVNDDFDTALTDLKTIIRAERLRMSRQKQRHDALISKLLAD</sequence>
<keyword id="KW-0067">ATP-binding</keyword>
<keyword id="KW-0963">Cytoplasm</keyword>
<keyword id="KW-0418">Kinase</keyword>
<keyword id="KW-0547">Nucleotide-binding</keyword>
<keyword id="KW-1185">Reference proteome</keyword>
<keyword id="KW-0808">Transferase</keyword>
<organism>
    <name type="scientific">Escherichia coli O157:H7</name>
    <dbReference type="NCBI Taxonomy" id="83334"/>
    <lineage>
        <taxon>Bacteria</taxon>
        <taxon>Pseudomonadati</taxon>
        <taxon>Pseudomonadota</taxon>
        <taxon>Gammaproteobacteria</taxon>
        <taxon>Enterobacterales</taxon>
        <taxon>Enterobacteriaceae</taxon>
        <taxon>Escherichia</taxon>
    </lineage>
</organism>